<dbReference type="EC" id="6.5.1.2" evidence="1"/>
<dbReference type="EMBL" id="CP000252">
    <property type="protein sequence ID" value="ABC77444.1"/>
    <property type="molecule type" value="Genomic_DNA"/>
</dbReference>
<dbReference type="SMR" id="Q2LTN8"/>
<dbReference type="FunCoup" id="Q2LTN8">
    <property type="interactions" value="406"/>
</dbReference>
<dbReference type="STRING" id="56780.SYN_02935"/>
<dbReference type="KEGG" id="sat:SYN_02935"/>
<dbReference type="eggNOG" id="COG0272">
    <property type="taxonomic scope" value="Bacteria"/>
</dbReference>
<dbReference type="HOGENOM" id="CLU_007764_2_1_7"/>
<dbReference type="InParanoid" id="Q2LTN8"/>
<dbReference type="OrthoDB" id="9759736at2"/>
<dbReference type="Proteomes" id="UP000001933">
    <property type="component" value="Chromosome"/>
</dbReference>
<dbReference type="GO" id="GO:0005829">
    <property type="term" value="C:cytosol"/>
    <property type="evidence" value="ECO:0007669"/>
    <property type="project" value="TreeGrafter"/>
</dbReference>
<dbReference type="GO" id="GO:0003911">
    <property type="term" value="F:DNA ligase (NAD+) activity"/>
    <property type="evidence" value="ECO:0007669"/>
    <property type="project" value="UniProtKB-UniRule"/>
</dbReference>
<dbReference type="GO" id="GO:0046872">
    <property type="term" value="F:metal ion binding"/>
    <property type="evidence" value="ECO:0007669"/>
    <property type="project" value="UniProtKB-KW"/>
</dbReference>
<dbReference type="GO" id="GO:0006281">
    <property type="term" value="P:DNA repair"/>
    <property type="evidence" value="ECO:0007669"/>
    <property type="project" value="UniProtKB-KW"/>
</dbReference>
<dbReference type="GO" id="GO:0006260">
    <property type="term" value="P:DNA replication"/>
    <property type="evidence" value="ECO:0007669"/>
    <property type="project" value="UniProtKB-KW"/>
</dbReference>
<dbReference type="CDD" id="cd17748">
    <property type="entry name" value="BRCT_DNA_ligase_like"/>
    <property type="match status" value="1"/>
</dbReference>
<dbReference type="CDD" id="cd00114">
    <property type="entry name" value="LIGANc"/>
    <property type="match status" value="1"/>
</dbReference>
<dbReference type="FunFam" id="1.10.150.20:FF:000006">
    <property type="entry name" value="DNA ligase"/>
    <property type="match status" value="1"/>
</dbReference>
<dbReference type="FunFam" id="1.10.150.20:FF:000007">
    <property type="entry name" value="DNA ligase"/>
    <property type="match status" value="1"/>
</dbReference>
<dbReference type="FunFam" id="2.40.50.140:FF:000012">
    <property type="entry name" value="DNA ligase"/>
    <property type="match status" value="1"/>
</dbReference>
<dbReference type="FunFam" id="3.30.470.30:FF:000001">
    <property type="entry name" value="DNA ligase"/>
    <property type="match status" value="1"/>
</dbReference>
<dbReference type="Gene3D" id="6.20.10.30">
    <property type="match status" value="1"/>
</dbReference>
<dbReference type="Gene3D" id="1.10.150.20">
    <property type="entry name" value="5' to 3' exonuclease, C-terminal subdomain"/>
    <property type="match status" value="2"/>
</dbReference>
<dbReference type="Gene3D" id="3.40.50.10190">
    <property type="entry name" value="BRCT domain"/>
    <property type="match status" value="1"/>
</dbReference>
<dbReference type="Gene3D" id="3.30.470.30">
    <property type="entry name" value="DNA ligase/mRNA capping enzyme"/>
    <property type="match status" value="1"/>
</dbReference>
<dbReference type="Gene3D" id="1.10.287.610">
    <property type="entry name" value="Helix hairpin bin"/>
    <property type="match status" value="1"/>
</dbReference>
<dbReference type="Gene3D" id="2.40.50.140">
    <property type="entry name" value="Nucleic acid-binding proteins"/>
    <property type="match status" value="1"/>
</dbReference>
<dbReference type="HAMAP" id="MF_01588">
    <property type="entry name" value="DNA_ligase_A"/>
    <property type="match status" value="1"/>
</dbReference>
<dbReference type="InterPro" id="IPR001357">
    <property type="entry name" value="BRCT_dom"/>
</dbReference>
<dbReference type="InterPro" id="IPR036420">
    <property type="entry name" value="BRCT_dom_sf"/>
</dbReference>
<dbReference type="InterPro" id="IPR041663">
    <property type="entry name" value="DisA/LigA_HHH"/>
</dbReference>
<dbReference type="InterPro" id="IPR001679">
    <property type="entry name" value="DNA_ligase"/>
</dbReference>
<dbReference type="InterPro" id="IPR018239">
    <property type="entry name" value="DNA_ligase_AS"/>
</dbReference>
<dbReference type="InterPro" id="IPR033136">
    <property type="entry name" value="DNA_ligase_CS"/>
</dbReference>
<dbReference type="InterPro" id="IPR013839">
    <property type="entry name" value="DNAligase_adenylation"/>
</dbReference>
<dbReference type="InterPro" id="IPR013840">
    <property type="entry name" value="DNAligase_N"/>
</dbReference>
<dbReference type="InterPro" id="IPR012340">
    <property type="entry name" value="NA-bd_OB-fold"/>
</dbReference>
<dbReference type="InterPro" id="IPR004150">
    <property type="entry name" value="NAD_DNA_ligase_OB"/>
</dbReference>
<dbReference type="InterPro" id="IPR010994">
    <property type="entry name" value="RuvA_2-like"/>
</dbReference>
<dbReference type="InterPro" id="IPR004149">
    <property type="entry name" value="Znf_DNAligase_C4"/>
</dbReference>
<dbReference type="NCBIfam" id="TIGR00575">
    <property type="entry name" value="dnlj"/>
    <property type="match status" value="1"/>
</dbReference>
<dbReference type="NCBIfam" id="NF005932">
    <property type="entry name" value="PRK07956.1"/>
    <property type="match status" value="1"/>
</dbReference>
<dbReference type="PANTHER" id="PTHR23389">
    <property type="entry name" value="CHROMOSOME TRANSMISSION FIDELITY FACTOR 18"/>
    <property type="match status" value="1"/>
</dbReference>
<dbReference type="PANTHER" id="PTHR23389:SF9">
    <property type="entry name" value="DNA LIGASE"/>
    <property type="match status" value="1"/>
</dbReference>
<dbReference type="Pfam" id="PF00533">
    <property type="entry name" value="BRCT"/>
    <property type="match status" value="1"/>
</dbReference>
<dbReference type="Pfam" id="PF01653">
    <property type="entry name" value="DNA_ligase_aden"/>
    <property type="match status" value="1"/>
</dbReference>
<dbReference type="Pfam" id="PF03120">
    <property type="entry name" value="DNA_ligase_OB"/>
    <property type="match status" value="1"/>
</dbReference>
<dbReference type="Pfam" id="PF03119">
    <property type="entry name" value="DNA_ligase_ZBD"/>
    <property type="match status" value="1"/>
</dbReference>
<dbReference type="Pfam" id="PF12826">
    <property type="entry name" value="HHH_2"/>
    <property type="match status" value="1"/>
</dbReference>
<dbReference type="Pfam" id="PF22745">
    <property type="entry name" value="Nlig-Ia"/>
    <property type="match status" value="1"/>
</dbReference>
<dbReference type="PIRSF" id="PIRSF001604">
    <property type="entry name" value="LigA"/>
    <property type="match status" value="1"/>
</dbReference>
<dbReference type="SMART" id="SM00292">
    <property type="entry name" value="BRCT"/>
    <property type="match status" value="1"/>
</dbReference>
<dbReference type="SMART" id="SM00532">
    <property type="entry name" value="LIGANc"/>
    <property type="match status" value="1"/>
</dbReference>
<dbReference type="SUPFAM" id="SSF52113">
    <property type="entry name" value="BRCT domain"/>
    <property type="match status" value="1"/>
</dbReference>
<dbReference type="SUPFAM" id="SSF56091">
    <property type="entry name" value="DNA ligase/mRNA capping enzyme, catalytic domain"/>
    <property type="match status" value="1"/>
</dbReference>
<dbReference type="SUPFAM" id="SSF50249">
    <property type="entry name" value="Nucleic acid-binding proteins"/>
    <property type="match status" value="1"/>
</dbReference>
<dbReference type="SUPFAM" id="SSF47781">
    <property type="entry name" value="RuvA domain 2-like"/>
    <property type="match status" value="1"/>
</dbReference>
<dbReference type="PROSITE" id="PS50172">
    <property type="entry name" value="BRCT"/>
    <property type="match status" value="1"/>
</dbReference>
<dbReference type="PROSITE" id="PS01055">
    <property type="entry name" value="DNA_LIGASE_N1"/>
    <property type="match status" value="1"/>
</dbReference>
<dbReference type="PROSITE" id="PS01056">
    <property type="entry name" value="DNA_LIGASE_N2"/>
    <property type="match status" value="1"/>
</dbReference>
<sequence length="672" mass="74509">MMDAESARKNIEDLKARIEYHNRRYYQLDDPEISDAEYDSLLQELIALEKQFPQWLTEDSPSRRIGAAPLSKFAPAVHLSPMLSLANAFSEEEILEFDRRLKRFLDSSERLSFVVEPKIDGVAVNLIYSSGVLTTGATRGDGAKGEDVTQNIRTLHTIPLKIQNGSDERLPEQIEIRGEIYMETAAFRKLNERRLAAGEPPFANPRNAAAGSLRQLDASITARRPLKMFCYAVGIVRGRAFTYHHDVLHALKKWGFSVNPFIRQVEGIEKCIEFYRELQDLRNELPYEIDGMVIKVDDLSLQTRLGAVSRSPRWAVACKFAATQATTVIRDIIVNVGRTGTLTPVALMTPVKVGGVTVSRATLHNQDEIDKKDIRIGDTVLVQRAGDVIPEVVKVIVSNRSGREIPFKIPDTCPECGSEVVRLAGEAAHRCIGLSCPAQLRRHIQHFVSRGGMDIEGLGDKLVSQLVNQKLIHDPADLYYLSHDALLNLERMAEKSVSNLLSAIELSKHPSLDKIIFALGIRHVGEHISKILARRFRTLDALINTTENELLAIRDIGPEVSSSILEFFRNASNRRVIEKLKKAGVSPLETISPRSAPLTGKTFVFTGALSRMTRDEAKQIVESLGGQAAGTVTKKTDYVVAGEAAGSKLQKAQKAGIAILSEEEFLRLAGKI</sequence>
<gene>
    <name evidence="1" type="primary">ligA</name>
    <name type="ordered locus">SYNAS_15650</name>
    <name type="ORF">SYN_02935</name>
</gene>
<proteinExistence type="inferred from homology"/>
<keyword id="KW-0227">DNA damage</keyword>
<keyword id="KW-0234">DNA repair</keyword>
<keyword id="KW-0235">DNA replication</keyword>
<keyword id="KW-0436">Ligase</keyword>
<keyword id="KW-0460">Magnesium</keyword>
<keyword id="KW-0464">Manganese</keyword>
<keyword id="KW-0479">Metal-binding</keyword>
<keyword id="KW-0520">NAD</keyword>
<keyword id="KW-1185">Reference proteome</keyword>
<keyword id="KW-0862">Zinc</keyword>
<accession>Q2LTN8</accession>
<evidence type="ECO:0000255" key="1">
    <source>
        <dbReference type="HAMAP-Rule" id="MF_01588"/>
    </source>
</evidence>
<reference key="1">
    <citation type="journal article" date="2007" name="Proc. Natl. Acad. Sci. U.S.A.">
        <title>The genome of Syntrophus aciditrophicus: life at the thermodynamic limit of microbial growth.</title>
        <authorList>
            <person name="McInerney M.J."/>
            <person name="Rohlin L."/>
            <person name="Mouttaki H."/>
            <person name="Kim U."/>
            <person name="Krupp R.S."/>
            <person name="Rios-Hernandez L."/>
            <person name="Sieber J."/>
            <person name="Struchtemeyer C.G."/>
            <person name="Bhattacharyya A."/>
            <person name="Campbell J.W."/>
            <person name="Gunsalus R.P."/>
        </authorList>
    </citation>
    <scope>NUCLEOTIDE SEQUENCE [LARGE SCALE GENOMIC DNA]</scope>
    <source>
        <strain>SB</strain>
    </source>
</reference>
<feature type="chain" id="PRO_0000313490" description="DNA ligase">
    <location>
        <begin position="1"/>
        <end position="672"/>
    </location>
</feature>
<feature type="domain" description="BRCT" evidence="1">
    <location>
        <begin position="593"/>
        <end position="672"/>
    </location>
</feature>
<feature type="active site" description="N6-AMP-lysine intermediate" evidence="1">
    <location>
        <position position="118"/>
    </location>
</feature>
<feature type="binding site" evidence="1">
    <location>
        <begin position="35"/>
        <end position="39"/>
    </location>
    <ligand>
        <name>NAD(+)</name>
        <dbReference type="ChEBI" id="CHEBI:57540"/>
    </ligand>
</feature>
<feature type="binding site" evidence="1">
    <location>
        <begin position="84"/>
        <end position="85"/>
    </location>
    <ligand>
        <name>NAD(+)</name>
        <dbReference type="ChEBI" id="CHEBI:57540"/>
    </ligand>
</feature>
<feature type="binding site" evidence="1">
    <location>
        <position position="116"/>
    </location>
    <ligand>
        <name>NAD(+)</name>
        <dbReference type="ChEBI" id="CHEBI:57540"/>
    </ligand>
</feature>
<feature type="binding site" evidence="1">
    <location>
        <position position="139"/>
    </location>
    <ligand>
        <name>NAD(+)</name>
        <dbReference type="ChEBI" id="CHEBI:57540"/>
    </ligand>
</feature>
<feature type="binding site" evidence="1">
    <location>
        <position position="179"/>
    </location>
    <ligand>
        <name>NAD(+)</name>
        <dbReference type="ChEBI" id="CHEBI:57540"/>
    </ligand>
</feature>
<feature type="binding site" evidence="1">
    <location>
        <position position="295"/>
    </location>
    <ligand>
        <name>NAD(+)</name>
        <dbReference type="ChEBI" id="CHEBI:57540"/>
    </ligand>
</feature>
<feature type="binding site" evidence="1">
    <location>
        <position position="319"/>
    </location>
    <ligand>
        <name>NAD(+)</name>
        <dbReference type="ChEBI" id="CHEBI:57540"/>
    </ligand>
</feature>
<feature type="binding site" evidence="1">
    <location>
        <position position="413"/>
    </location>
    <ligand>
        <name>Zn(2+)</name>
        <dbReference type="ChEBI" id="CHEBI:29105"/>
    </ligand>
</feature>
<feature type="binding site" evidence="1">
    <location>
        <position position="416"/>
    </location>
    <ligand>
        <name>Zn(2+)</name>
        <dbReference type="ChEBI" id="CHEBI:29105"/>
    </ligand>
</feature>
<feature type="binding site" evidence="1">
    <location>
        <position position="431"/>
    </location>
    <ligand>
        <name>Zn(2+)</name>
        <dbReference type="ChEBI" id="CHEBI:29105"/>
    </ligand>
</feature>
<feature type="binding site" evidence="1">
    <location>
        <position position="436"/>
    </location>
    <ligand>
        <name>Zn(2+)</name>
        <dbReference type="ChEBI" id="CHEBI:29105"/>
    </ligand>
</feature>
<comment type="function">
    <text evidence="1">DNA ligase that catalyzes the formation of phosphodiester linkages between 5'-phosphoryl and 3'-hydroxyl groups in double-stranded DNA using NAD as a coenzyme and as the energy source for the reaction. It is essential for DNA replication and repair of damaged DNA.</text>
</comment>
<comment type="catalytic activity">
    <reaction evidence="1">
        <text>NAD(+) + (deoxyribonucleotide)n-3'-hydroxyl + 5'-phospho-(deoxyribonucleotide)m = (deoxyribonucleotide)n+m + AMP + beta-nicotinamide D-nucleotide.</text>
        <dbReference type="EC" id="6.5.1.2"/>
    </reaction>
</comment>
<comment type="cofactor">
    <cofactor evidence="1">
        <name>Mg(2+)</name>
        <dbReference type="ChEBI" id="CHEBI:18420"/>
    </cofactor>
    <cofactor evidence="1">
        <name>Mn(2+)</name>
        <dbReference type="ChEBI" id="CHEBI:29035"/>
    </cofactor>
</comment>
<comment type="similarity">
    <text evidence="1">Belongs to the NAD-dependent DNA ligase family. LigA subfamily.</text>
</comment>
<protein>
    <recommendedName>
        <fullName evidence="1">DNA ligase</fullName>
        <ecNumber evidence="1">6.5.1.2</ecNumber>
    </recommendedName>
    <alternativeName>
        <fullName evidence="1">Polydeoxyribonucleotide synthase [NAD(+)]</fullName>
    </alternativeName>
</protein>
<name>DNLJ_SYNAS</name>
<organism>
    <name type="scientific">Syntrophus aciditrophicus (strain SB)</name>
    <dbReference type="NCBI Taxonomy" id="56780"/>
    <lineage>
        <taxon>Bacteria</taxon>
        <taxon>Pseudomonadati</taxon>
        <taxon>Thermodesulfobacteriota</taxon>
        <taxon>Syntrophia</taxon>
        <taxon>Syntrophales</taxon>
        <taxon>Syntrophaceae</taxon>
        <taxon>Syntrophus</taxon>
    </lineage>
</organism>